<accession>Q9UXT0</accession>
<accession>G8ZKW1</accession>
<name>GCSPA_PYRAB</name>
<keyword id="KW-0560">Oxidoreductase</keyword>
<gene>
    <name evidence="1" type="primary">gcvPA</name>
    <name type="ordered locus">PYRAB17780</name>
    <name type="ORF">PAB1171</name>
</gene>
<evidence type="ECO:0000255" key="1">
    <source>
        <dbReference type="HAMAP-Rule" id="MF_00712"/>
    </source>
</evidence>
<comment type="function">
    <text evidence="1">The glycine cleavage system catalyzes the degradation of glycine. The P protein binds the alpha-amino group of glycine through its pyridoxal phosphate cofactor; CO(2) is released and the remaining methylamine moiety is then transferred to the lipoamide cofactor of the H protein.</text>
</comment>
<comment type="catalytic activity">
    <reaction evidence="1">
        <text>N(6)-[(R)-lipoyl]-L-lysyl-[glycine-cleavage complex H protein] + glycine + H(+) = N(6)-[(R)-S(8)-aminomethyldihydrolipoyl]-L-lysyl-[glycine-cleavage complex H protein] + CO2</text>
        <dbReference type="Rhea" id="RHEA:24304"/>
        <dbReference type="Rhea" id="RHEA-COMP:10494"/>
        <dbReference type="Rhea" id="RHEA-COMP:10495"/>
        <dbReference type="ChEBI" id="CHEBI:15378"/>
        <dbReference type="ChEBI" id="CHEBI:16526"/>
        <dbReference type="ChEBI" id="CHEBI:57305"/>
        <dbReference type="ChEBI" id="CHEBI:83099"/>
        <dbReference type="ChEBI" id="CHEBI:83143"/>
        <dbReference type="EC" id="1.4.4.2"/>
    </reaction>
</comment>
<comment type="subunit">
    <text evidence="1">The glycine cleavage system is composed of four proteins: P, T, L and H. In this organism, the P 'protein' is a heterodimer of two subunits.</text>
</comment>
<comment type="similarity">
    <text evidence="1">Belongs to the GcvP family. N-terminal subunit subfamily.</text>
</comment>
<dbReference type="EC" id="1.4.4.2" evidence="1"/>
<dbReference type="EMBL" id="AJ248288">
    <property type="protein sequence ID" value="CAB50683.1"/>
    <property type="molecule type" value="Genomic_DNA"/>
</dbReference>
<dbReference type="EMBL" id="HE613800">
    <property type="protein sequence ID" value="CCE71252.1"/>
    <property type="molecule type" value="Genomic_DNA"/>
</dbReference>
<dbReference type="PIR" id="E75030">
    <property type="entry name" value="E75030"/>
</dbReference>
<dbReference type="RefSeq" id="WP_010868897.1">
    <property type="nucleotide sequence ID" value="NC_000868.1"/>
</dbReference>
<dbReference type="SMR" id="Q9UXT0"/>
<dbReference type="STRING" id="272844.PAB1171"/>
<dbReference type="KEGG" id="pab:PAB1171"/>
<dbReference type="PATRIC" id="fig|272844.11.peg.1897"/>
<dbReference type="eggNOG" id="arCOG00077">
    <property type="taxonomic scope" value="Archaea"/>
</dbReference>
<dbReference type="HOGENOM" id="CLU_004620_0_2_2"/>
<dbReference type="OrthoDB" id="17655at2157"/>
<dbReference type="PhylomeDB" id="Q9UXT0"/>
<dbReference type="Proteomes" id="UP000000810">
    <property type="component" value="Chromosome"/>
</dbReference>
<dbReference type="Proteomes" id="UP000009139">
    <property type="component" value="Chromosome"/>
</dbReference>
<dbReference type="GO" id="GO:0004375">
    <property type="term" value="F:glycine dehydrogenase (decarboxylating) activity"/>
    <property type="evidence" value="ECO:0007669"/>
    <property type="project" value="UniProtKB-EC"/>
</dbReference>
<dbReference type="GO" id="GO:0019464">
    <property type="term" value="P:glycine decarboxylation via glycine cleavage system"/>
    <property type="evidence" value="ECO:0007669"/>
    <property type="project" value="UniProtKB-UniRule"/>
</dbReference>
<dbReference type="GO" id="GO:0009116">
    <property type="term" value="P:nucleoside metabolic process"/>
    <property type="evidence" value="ECO:0007669"/>
    <property type="project" value="InterPro"/>
</dbReference>
<dbReference type="CDD" id="cd00613">
    <property type="entry name" value="GDC-P"/>
    <property type="match status" value="1"/>
</dbReference>
<dbReference type="Gene3D" id="3.90.1150.10">
    <property type="entry name" value="Aspartate Aminotransferase, domain 1"/>
    <property type="match status" value="1"/>
</dbReference>
<dbReference type="Gene3D" id="3.40.640.10">
    <property type="entry name" value="Type I PLP-dependent aspartate aminotransferase-like (Major domain)"/>
    <property type="match status" value="1"/>
</dbReference>
<dbReference type="HAMAP" id="MF_00712">
    <property type="entry name" value="GcvPA"/>
    <property type="match status" value="1"/>
</dbReference>
<dbReference type="InterPro" id="IPR023010">
    <property type="entry name" value="GcvPA"/>
</dbReference>
<dbReference type="InterPro" id="IPR049315">
    <property type="entry name" value="GDC-P_N"/>
</dbReference>
<dbReference type="InterPro" id="IPR020581">
    <property type="entry name" value="GDC_P"/>
</dbReference>
<dbReference type="InterPro" id="IPR015424">
    <property type="entry name" value="PyrdxlP-dep_Trfase"/>
</dbReference>
<dbReference type="InterPro" id="IPR015421">
    <property type="entry name" value="PyrdxlP-dep_Trfase_major"/>
</dbReference>
<dbReference type="InterPro" id="IPR015422">
    <property type="entry name" value="PyrdxlP-dep_Trfase_small"/>
</dbReference>
<dbReference type="NCBIfam" id="NF001696">
    <property type="entry name" value="PRK00451.1"/>
    <property type="match status" value="1"/>
</dbReference>
<dbReference type="PANTHER" id="PTHR42806">
    <property type="entry name" value="GLYCINE CLEAVAGE SYSTEM P-PROTEIN"/>
    <property type="match status" value="1"/>
</dbReference>
<dbReference type="PANTHER" id="PTHR42806:SF1">
    <property type="entry name" value="GLYCINE DEHYDROGENASE (DECARBOXYLATING)"/>
    <property type="match status" value="1"/>
</dbReference>
<dbReference type="Pfam" id="PF02347">
    <property type="entry name" value="GDC-P"/>
    <property type="match status" value="1"/>
</dbReference>
<dbReference type="PIRSF" id="PIRSF006815">
    <property type="entry name" value="GcvPA"/>
    <property type="match status" value="1"/>
</dbReference>
<dbReference type="SUPFAM" id="SSF53383">
    <property type="entry name" value="PLP-dependent transferases"/>
    <property type="match status" value="1"/>
</dbReference>
<protein>
    <recommendedName>
        <fullName evidence="1">Probable glycine dehydrogenase (decarboxylating) subunit 1</fullName>
        <ecNumber evidence="1">1.4.4.2</ecNumber>
    </recommendedName>
    <alternativeName>
        <fullName evidence="1">Glycine cleavage system P-protein subunit 1</fullName>
    </alternativeName>
    <alternativeName>
        <fullName evidence="1">Glycine decarboxylase subunit 1</fullName>
    </alternativeName>
    <alternativeName>
        <fullName evidence="1">Glycine dehydrogenase (aminomethyl-transferring) subunit 1</fullName>
    </alternativeName>
</protein>
<organism>
    <name type="scientific">Pyrococcus abyssi (strain GE5 / Orsay)</name>
    <dbReference type="NCBI Taxonomy" id="272844"/>
    <lineage>
        <taxon>Archaea</taxon>
        <taxon>Methanobacteriati</taxon>
        <taxon>Methanobacteriota</taxon>
        <taxon>Thermococci</taxon>
        <taxon>Thermococcales</taxon>
        <taxon>Thermococcaceae</taxon>
        <taxon>Pyrococcus</taxon>
    </lineage>
</organism>
<reference key="1">
    <citation type="journal article" date="2003" name="Mol. Microbiol.">
        <title>An integrated analysis of the genome of the hyperthermophilic archaeon Pyrococcus abyssi.</title>
        <authorList>
            <person name="Cohen G.N."/>
            <person name="Barbe V."/>
            <person name="Flament D."/>
            <person name="Galperin M."/>
            <person name="Heilig R."/>
            <person name="Lecompte O."/>
            <person name="Poch O."/>
            <person name="Prieur D."/>
            <person name="Querellou J."/>
            <person name="Ripp R."/>
            <person name="Thierry J.-C."/>
            <person name="Van der Oost J."/>
            <person name="Weissenbach J."/>
            <person name="Zivanovic Y."/>
            <person name="Forterre P."/>
        </authorList>
    </citation>
    <scope>NUCLEOTIDE SEQUENCE [LARGE SCALE GENOMIC DNA]</scope>
    <source>
        <strain>GE5 / Orsay</strain>
    </source>
</reference>
<reference key="2">
    <citation type="journal article" date="2012" name="Curr. Microbiol.">
        <title>Re-annotation of two hyperthermophilic archaea Pyrococcus abyssi GE5 and Pyrococcus furiosus DSM 3638.</title>
        <authorList>
            <person name="Gao J."/>
            <person name="Wang J."/>
        </authorList>
    </citation>
    <scope>GENOME REANNOTATION</scope>
    <source>
        <strain>GE5 / Orsay</strain>
    </source>
</reference>
<feature type="chain" id="PRO_0000166984" description="Probable glycine dehydrogenase (decarboxylating) subunit 1">
    <location>
        <begin position="1"/>
        <end position="449"/>
    </location>
</feature>
<sequence length="449" mass="50319">MAKHYIPNSAHKEEMLKEIGLSSIDELFADIPGKFIRDELNLPEGKSEYEVFLEMNEILGKNKTVLEMPTFLGAGTYFHYIPAHVKYLIERSEFLTAYTPYQPEISQGMLQALFEYQSLIAELVGLPVVNASMYDWGTAMAEAALMTVRLHRGKRKKFIVPRHTHPERLQVLETYAKGPGVEIETVKWNERGQVDIEDLKEKVKDAAGVYVEIPNFFGLLEEEVREIGEIAHEAGAYFVVGVDPTILGIVEAPGELGADIVVGEASYFGNPMNFGGPRAGIFAVRNDMKLIRQMPGRLIGMTKDAEGKRAFVMTLQTREQHIRRAKATSNICSNEALVAVAAAIHIASLGPRGIRELGEVILKNTAYLKKRLSEVAEIPFDGVNFKDVLVRFEKPYKEIHEELLKRNIHGGYYVGKHFPELGESALFAATETTRKEWVDALISALREVI</sequence>
<proteinExistence type="inferred from homology"/>